<gene>
    <name type="primary">HAT4</name>
    <name type="synonym">ATHB-2</name>
    <name type="ordered locus">At4g16780</name>
    <name type="ORF">dl4415w</name>
    <name type="ORF">FCAALL.101</name>
</gene>
<organism>
    <name type="scientific">Arabidopsis thaliana</name>
    <name type="common">Mouse-ear cress</name>
    <dbReference type="NCBI Taxonomy" id="3702"/>
    <lineage>
        <taxon>Eukaryota</taxon>
        <taxon>Viridiplantae</taxon>
        <taxon>Streptophyta</taxon>
        <taxon>Embryophyta</taxon>
        <taxon>Tracheophyta</taxon>
        <taxon>Spermatophyta</taxon>
        <taxon>Magnoliopsida</taxon>
        <taxon>eudicotyledons</taxon>
        <taxon>Gunneridae</taxon>
        <taxon>Pentapetalae</taxon>
        <taxon>rosids</taxon>
        <taxon>malvids</taxon>
        <taxon>Brassicales</taxon>
        <taxon>Brassicaceae</taxon>
        <taxon>Camelineae</taxon>
        <taxon>Arabidopsis</taxon>
    </lineage>
</organism>
<name>HAT4_ARATH</name>
<keyword id="KW-0217">Developmental protein</keyword>
<keyword id="KW-0238">DNA-binding</keyword>
<keyword id="KW-0371">Homeobox</keyword>
<keyword id="KW-0539">Nucleus</keyword>
<keyword id="KW-0607">Phytochrome signaling pathway</keyword>
<keyword id="KW-1185">Reference proteome</keyword>
<keyword id="KW-0678">Repressor</keyword>
<keyword id="KW-0804">Transcription</keyword>
<keyword id="KW-0805">Transcription regulation</keyword>
<sequence>MMFEKDDLGLSLGLNFPKKQINLKSNPSVSVTPSSSSFGLFRRSSWNESFTSSVPNSDSSQKETRTFIRGIDVNRPPSTAEYGDEDAGVSSPNSTVSSSTGKRSEREEDTDPQGSRGISDDEDGDNSRKKLRLSKDQSAILEETFKDHSTLNPKQKQALAKQLGLRARQVEVWFQNRRARTKLKQTEVDCEFLRRCCENLTEENRRLQKEVTELRALKLSPQFYMHMSPPTTLTMCPSCEHVSVPPPQPQAATSAHHRSLPVNAWAPATRISHGLTFDALRPRS</sequence>
<proteinExistence type="evidence at protein level"/>
<protein>
    <recommendedName>
        <fullName>Homeobox-leucine zipper protein HAT4</fullName>
    </recommendedName>
    <alternativeName>
        <fullName>HD-ZIP protein ATHB-2</fullName>
    </alternativeName>
    <alternativeName>
        <fullName>Homeodomain transcription factor ATHB-2</fullName>
    </alternativeName>
    <alternativeName>
        <fullName>Homeodomain-leucine zipper protein HAT4</fullName>
        <shortName>HD-ZIP protein 4</shortName>
    </alternativeName>
</protein>
<accession>Q05466</accession>
<accession>A5Y7H1</accession>
<accession>A5Y7H2</accession>
<accession>A5Y7H3</accession>
<accession>A5Y7H4</accession>
<accession>A5Y7H5</accession>
<accession>A5Y7H6</accession>
<accession>A5Y7H7</accession>
<accession>A5Y7H8</accession>
<accession>A5Y7H9</accession>
<accession>A5Y7I0</accession>
<accession>A5Y7I1</accession>
<accession>A5Y7I2</accession>
<accession>A5Y7I3</accession>
<accession>A5Y7I4</accession>
<accession>A5Y7I5</accession>
<evidence type="ECO:0000255" key="1">
    <source>
        <dbReference type="PROSITE-ProRule" id="PRU00108"/>
    </source>
</evidence>
<evidence type="ECO:0000256" key="2">
    <source>
        <dbReference type="SAM" id="MobiDB-lite"/>
    </source>
</evidence>
<evidence type="ECO:0000269" key="3">
    <source>
    </source>
</evidence>
<evidence type="ECO:0000269" key="4">
    <source>
    </source>
</evidence>
<evidence type="ECO:0000269" key="5">
    <source>
    </source>
</evidence>
<evidence type="ECO:0000269" key="6">
    <source>
    </source>
</evidence>
<evidence type="ECO:0000269" key="7">
    <source>
    </source>
</evidence>
<evidence type="ECO:0000269" key="8">
    <source>
    </source>
</evidence>
<evidence type="ECO:0000305" key="9"/>
<dbReference type="EMBL" id="M90394">
    <property type="protein sequence ID" value="AAA32815.1"/>
    <property type="molecule type" value="mRNA"/>
</dbReference>
<dbReference type="EMBL" id="Z19602">
    <property type="protein sequence ID" value="CAA79670.1"/>
    <property type="molecule type" value="Genomic_DNA"/>
</dbReference>
<dbReference type="EMBL" id="X68145">
    <property type="protein sequence ID" value="CAA48246.1"/>
    <property type="molecule type" value="mRNA"/>
</dbReference>
<dbReference type="EMBL" id="X68146">
    <property type="protein sequence ID" value="CAA48248.1"/>
    <property type="molecule type" value="Genomic_DNA"/>
</dbReference>
<dbReference type="EMBL" id="Z97342">
    <property type="protein sequence ID" value="CAB10452.1"/>
    <property type="molecule type" value="Genomic_DNA"/>
</dbReference>
<dbReference type="EMBL" id="AL161544">
    <property type="protein sequence ID" value="CAB78720.1"/>
    <property type="molecule type" value="Genomic_DNA"/>
</dbReference>
<dbReference type="EMBL" id="CP002687">
    <property type="protein sequence ID" value="AEE83803.1"/>
    <property type="molecule type" value="Genomic_DNA"/>
</dbReference>
<dbReference type="EMBL" id="AF375453">
    <property type="protein sequence ID" value="AAK53037.1"/>
    <property type="molecule type" value="mRNA"/>
</dbReference>
<dbReference type="EMBL" id="AY081747">
    <property type="protein sequence ID" value="AAL87400.1"/>
    <property type="molecule type" value="mRNA"/>
</dbReference>
<dbReference type="EMBL" id="EF193551">
    <property type="protein sequence ID" value="ABP96504.1"/>
    <property type="molecule type" value="Genomic_DNA"/>
</dbReference>
<dbReference type="EMBL" id="EF193552">
    <property type="protein sequence ID" value="ABP96505.1"/>
    <property type="molecule type" value="Genomic_DNA"/>
</dbReference>
<dbReference type="EMBL" id="EF193553">
    <property type="protein sequence ID" value="ABP96506.1"/>
    <property type="molecule type" value="Genomic_DNA"/>
</dbReference>
<dbReference type="EMBL" id="EF193554">
    <property type="protein sequence ID" value="ABP96507.1"/>
    <property type="molecule type" value="Genomic_DNA"/>
</dbReference>
<dbReference type="EMBL" id="EF193555">
    <property type="protein sequence ID" value="ABP96508.1"/>
    <property type="molecule type" value="Genomic_DNA"/>
</dbReference>
<dbReference type="EMBL" id="EF193556">
    <property type="protein sequence ID" value="ABP96509.1"/>
    <property type="molecule type" value="Genomic_DNA"/>
</dbReference>
<dbReference type="EMBL" id="EF193557">
    <property type="protein sequence ID" value="ABP96510.1"/>
    <property type="molecule type" value="Genomic_DNA"/>
</dbReference>
<dbReference type="EMBL" id="EF193558">
    <property type="protein sequence ID" value="ABP96511.1"/>
    <property type="molecule type" value="Genomic_DNA"/>
</dbReference>
<dbReference type="EMBL" id="EF193559">
    <property type="protein sequence ID" value="ABP96512.1"/>
    <property type="molecule type" value="Genomic_DNA"/>
</dbReference>
<dbReference type="EMBL" id="EF193560">
    <property type="protein sequence ID" value="ABP96513.1"/>
    <property type="molecule type" value="Genomic_DNA"/>
</dbReference>
<dbReference type="EMBL" id="EF193561">
    <property type="protein sequence ID" value="ABP96514.1"/>
    <property type="molecule type" value="Genomic_DNA"/>
</dbReference>
<dbReference type="EMBL" id="EF193562">
    <property type="protein sequence ID" value="ABP96515.1"/>
    <property type="molecule type" value="Genomic_DNA"/>
</dbReference>
<dbReference type="EMBL" id="EF193563">
    <property type="protein sequence ID" value="ABP96516.1"/>
    <property type="molecule type" value="Genomic_DNA"/>
</dbReference>
<dbReference type="EMBL" id="EF193564">
    <property type="protein sequence ID" value="ABP96517.1"/>
    <property type="molecule type" value="Genomic_DNA"/>
</dbReference>
<dbReference type="EMBL" id="EF193565">
    <property type="protein sequence ID" value="ABP96518.1"/>
    <property type="molecule type" value="Genomic_DNA"/>
</dbReference>
<dbReference type="EMBL" id="AY174653">
    <property type="protein sequence ID" value="AAO19435.1"/>
    <property type="molecule type" value="Genomic_DNA"/>
</dbReference>
<dbReference type="EMBL" id="AY174654">
    <property type="protein sequence ID" value="AAO19436.1"/>
    <property type="molecule type" value="Genomic_DNA"/>
</dbReference>
<dbReference type="EMBL" id="AY174655">
    <property type="protein sequence ID" value="AAO19437.1"/>
    <property type="molecule type" value="Genomic_DNA"/>
</dbReference>
<dbReference type="EMBL" id="AY174656">
    <property type="protein sequence ID" value="AAO19438.1"/>
    <property type="molecule type" value="Genomic_DNA"/>
</dbReference>
<dbReference type="PIR" id="S31424">
    <property type="entry name" value="S31424"/>
</dbReference>
<dbReference type="SMR" id="Q05466"/>
<dbReference type="BioGRID" id="12677">
    <property type="interactions" value="34"/>
</dbReference>
<dbReference type="FunCoup" id="Q05466">
    <property type="interactions" value="30"/>
</dbReference>
<dbReference type="IntAct" id="Q05466">
    <property type="interactions" value="38"/>
</dbReference>
<dbReference type="STRING" id="3702.Q05466"/>
<dbReference type="GlyGen" id="Q05466">
    <property type="glycosylation" value="1 site"/>
</dbReference>
<dbReference type="iPTMnet" id="Q05466"/>
<dbReference type="PaxDb" id="3702-AT4G16780.1"/>
<dbReference type="ProteomicsDB" id="247214"/>
<dbReference type="EnsemblPlants" id="AT4G16780.1">
    <property type="protein sequence ID" value="AT4G16780.1"/>
    <property type="gene ID" value="AT4G16780"/>
</dbReference>
<dbReference type="GeneID" id="827384"/>
<dbReference type="Gramene" id="AT4G16780.1">
    <property type="protein sequence ID" value="AT4G16780.1"/>
    <property type="gene ID" value="AT4G16780"/>
</dbReference>
<dbReference type="KEGG" id="ath:AT4G16780"/>
<dbReference type="Araport" id="AT4G16780"/>
<dbReference type="TAIR" id="AT4G16780">
    <property type="gene designation" value="HB-2"/>
</dbReference>
<dbReference type="eggNOG" id="KOG0483">
    <property type="taxonomic scope" value="Eukaryota"/>
</dbReference>
<dbReference type="HOGENOM" id="CLU_049516_2_1_1"/>
<dbReference type="InParanoid" id="Q05466"/>
<dbReference type="OMA" id="FYMHMSP"/>
<dbReference type="PhylomeDB" id="Q05466"/>
<dbReference type="PRO" id="PR:Q05466"/>
<dbReference type="Proteomes" id="UP000006548">
    <property type="component" value="Chromosome 4"/>
</dbReference>
<dbReference type="ExpressionAtlas" id="Q05466">
    <property type="expression patterns" value="baseline and differential"/>
</dbReference>
<dbReference type="GO" id="GO:0005634">
    <property type="term" value="C:nucleus"/>
    <property type="evidence" value="ECO:0007005"/>
    <property type="project" value="TAIR"/>
</dbReference>
<dbReference type="GO" id="GO:0003700">
    <property type="term" value="F:DNA-binding transcription factor activity"/>
    <property type="evidence" value="ECO:0000250"/>
    <property type="project" value="TAIR"/>
</dbReference>
<dbReference type="GO" id="GO:0000981">
    <property type="term" value="F:DNA-binding transcription factor activity, RNA polymerase II-specific"/>
    <property type="evidence" value="ECO:0007669"/>
    <property type="project" value="InterPro"/>
</dbReference>
<dbReference type="GO" id="GO:0042803">
    <property type="term" value="F:protein homodimerization activity"/>
    <property type="evidence" value="ECO:0000314"/>
    <property type="project" value="TAIR"/>
</dbReference>
<dbReference type="GO" id="GO:0043565">
    <property type="term" value="F:sequence-specific DNA binding"/>
    <property type="evidence" value="ECO:0000314"/>
    <property type="project" value="TAIR"/>
</dbReference>
<dbReference type="GO" id="GO:0010311">
    <property type="term" value="P:lateral root formation"/>
    <property type="evidence" value="ECO:0000315"/>
    <property type="project" value="TAIR"/>
</dbReference>
<dbReference type="GO" id="GO:0045892">
    <property type="term" value="P:negative regulation of DNA-templated transcription"/>
    <property type="evidence" value="ECO:0000314"/>
    <property type="project" value="TAIR"/>
</dbReference>
<dbReference type="GO" id="GO:0010017">
    <property type="term" value="P:red or far-red light signaling pathway"/>
    <property type="evidence" value="ECO:0000270"/>
    <property type="project" value="TAIR"/>
</dbReference>
<dbReference type="GO" id="GO:0009585">
    <property type="term" value="P:red, far-red light phototransduction"/>
    <property type="evidence" value="ECO:0007669"/>
    <property type="project" value="UniProtKB-KW"/>
</dbReference>
<dbReference type="GO" id="GO:0009733">
    <property type="term" value="P:response to auxin"/>
    <property type="evidence" value="ECO:0000315"/>
    <property type="project" value="TAIR"/>
</dbReference>
<dbReference type="GO" id="GO:0009735">
    <property type="term" value="P:response to cytokinin"/>
    <property type="evidence" value="ECO:0000270"/>
    <property type="project" value="TAIR"/>
</dbReference>
<dbReference type="GO" id="GO:0010218">
    <property type="term" value="P:response to far red light"/>
    <property type="evidence" value="ECO:0000270"/>
    <property type="project" value="TAIR"/>
</dbReference>
<dbReference type="GO" id="GO:0048364">
    <property type="term" value="P:root development"/>
    <property type="evidence" value="ECO:0000315"/>
    <property type="project" value="TAIR"/>
</dbReference>
<dbReference type="GO" id="GO:0080191">
    <property type="term" value="P:secondary thickening"/>
    <property type="evidence" value="ECO:0000315"/>
    <property type="project" value="TAIR"/>
</dbReference>
<dbReference type="GO" id="GO:0009641">
    <property type="term" value="P:shade avoidance"/>
    <property type="evidence" value="ECO:0000270"/>
    <property type="project" value="TAIR"/>
</dbReference>
<dbReference type="GO" id="GO:0010016">
    <property type="term" value="P:shoot system morphogenesis"/>
    <property type="evidence" value="ECO:0000315"/>
    <property type="project" value="TAIR"/>
</dbReference>
<dbReference type="GO" id="GO:0009826">
    <property type="term" value="P:unidimensional cell growth"/>
    <property type="evidence" value="ECO:0000315"/>
    <property type="project" value="TAIR"/>
</dbReference>
<dbReference type="CDD" id="cd00086">
    <property type="entry name" value="homeodomain"/>
    <property type="match status" value="1"/>
</dbReference>
<dbReference type="FunFam" id="1.10.10.60:FF:000577">
    <property type="entry name" value="Homeobox-leucine zipper protein 18"/>
    <property type="match status" value="1"/>
</dbReference>
<dbReference type="Gene3D" id="1.10.10.60">
    <property type="entry name" value="Homeodomain-like"/>
    <property type="match status" value="1"/>
</dbReference>
<dbReference type="InterPro" id="IPR001356">
    <property type="entry name" value="HD"/>
</dbReference>
<dbReference type="InterPro" id="IPR050762">
    <property type="entry name" value="HD-ZIP_Homeobox_LZ_Class_II"/>
</dbReference>
<dbReference type="InterPro" id="IPR006712">
    <property type="entry name" value="HD-ZIP_N"/>
</dbReference>
<dbReference type="InterPro" id="IPR017970">
    <property type="entry name" value="Homeobox_CS"/>
</dbReference>
<dbReference type="InterPro" id="IPR009057">
    <property type="entry name" value="Homeodomain-like_sf"/>
</dbReference>
<dbReference type="InterPro" id="IPR000047">
    <property type="entry name" value="HTH_motif"/>
</dbReference>
<dbReference type="InterPro" id="IPR003106">
    <property type="entry name" value="Leu_zip_homeo"/>
</dbReference>
<dbReference type="PANTHER" id="PTHR45714">
    <property type="entry name" value="HOMEOBOX-LEUCINE ZIPPER PROTEIN HAT14"/>
    <property type="match status" value="1"/>
</dbReference>
<dbReference type="PANTHER" id="PTHR45714:SF88">
    <property type="entry name" value="HOMEOBOX-LEUCINE ZIPPER PROTEIN HAT4"/>
    <property type="match status" value="1"/>
</dbReference>
<dbReference type="Pfam" id="PF02183">
    <property type="entry name" value="HALZ"/>
    <property type="match status" value="1"/>
</dbReference>
<dbReference type="Pfam" id="PF04618">
    <property type="entry name" value="HD-ZIP_N"/>
    <property type="match status" value="1"/>
</dbReference>
<dbReference type="Pfam" id="PF00046">
    <property type="entry name" value="Homeodomain"/>
    <property type="match status" value="1"/>
</dbReference>
<dbReference type="PRINTS" id="PR00031">
    <property type="entry name" value="HTHREPRESSR"/>
</dbReference>
<dbReference type="SMART" id="SM00340">
    <property type="entry name" value="HALZ"/>
    <property type="match status" value="1"/>
</dbReference>
<dbReference type="SMART" id="SM00389">
    <property type="entry name" value="HOX"/>
    <property type="match status" value="1"/>
</dbReference>
<dbReference type="SUPFAM" id="SSF46689">
    <property type="entry name" value="Homeodomain-like"/>
    <property type="match status" value="1"/>
</dbReference>
<dbReference type="PROSITE" id="PS00027">
    <property type="entry name" value="HOMEOBOX_1"/>
    <property type="match status" value="1"/>
</dbReference>
<dbReference type="PROSITE" id="PS50071">
    <property type="entry name" value="HOMEOBOX_2"/>
    <property type="match status" value="1"/>
</dbReference>
<reference key="1">
    <citation type="journal article" date="1992" name="Proc. Natl. Acad. Sci. U.S.A.">
        <title>HD-Zip proteins: members of an Arabidopsis homeodomain protein superfamily.</title>
        <authorList>
            <person name="Schena M."/>
            <person name="Davis R.W."/>
        </authorList>
    </citation>
    <scope>NUCLEOTIDE SEQUENCE [MRNA]</scope>
    <source>
        <strain>cv. Columbia</strain>
    </source>
</reference>
<reference key="2">
    <citation type="journal article" date="1993" name="Genes Dev.">
        <title>The HAT4 gene of Arabidopsis encodes a developmental regulator.</title>
        <authorList>
            <person name="Schena M."/>
            <person name="Lloyd A.M."/>
            <person name="Davis R.W."/>
        </authorList>
    </citation>
    <scope>NUCLEOTIDE SEQUENCE [GENOMIC DNA]</scope>
    <scope>FUNCTION</scope>
    <source>
        <strain>cv. Columbia</strain>
    </source>
</reference>
<reference key="3">
    <citation type="journal article" date="1993" name="Plant J.">
        <title>The Arabidopsis Athb-2 and -4 genes are strongly induced by far-red-rich light.</title>
        <authorList>
            <person name="Carabelli M."/>
            <person name="Sessa G."/>
            <person name="Baima S."/>
            <person name="Morelli G."/>
            <person name="Ruberti I."/>
        </authorList>
    </citation>
    <scope>NUCLEOTIDE SEQUENCE [GENOMIC DNA / MRNA]</scope>
    <scope>TISSUE SPECIFICITY</scope>
    <scope>INDUCTION</scope>
    <source>
        <strain>cv. Columbia</strain>
    </source>
</reference>
<reference key="4">
    <citation type="journal article" date="1998" name="Nature">
        <title>Analysis of 1.9 Mb of contiguous sequence from chromosome 4 of Arabidopsis thaliana.</title>
        <authorList>
            <person name="Bevan M."/>
            <person name="Bancroft I."/>
            <person name="Bent E."/>
            <person name="Love K."/>
            <person name="Goodman H.M."/>
            <person name="Dean C."/>
            <person name="Bergkamp R."/>
            <person name="Dirkse W."/>
            <person name="van Staveren M."/>
            <person name="Stiekema W."/>
            <person name="Drost L."/>
            <person name="Ridley P."/>
            <person name="Hudson S.-A."/>
            <person name="Patel K."/>
            <person name="Murphy G."/>
            <person name="Piffanelli P."/>
            <person name="Wedler H."/>
            <person name="Wedler E."/>
            <person name="Wambutt R."/>
            <person name="Weitzenegger T."/>
            <person name="Pohl T."/>
            <person name="Terryn N."/>
            <person name="Gielen J."/>
            <person name="Villarroel R."/>
            <person name="De Clercq R."/>
            <person name="van Montagu M."/>
            <person name="Lecharny A."/>
            <person name="Aubourg S."/>
            <person name="Gy I."/>
            <person name="Kreis M."/>
            <person name="Lao N."/>
            <person name="Kavanagh T."/>
            <person name="Hempel S."/>
            <person name="Kotter P."/>
            <person name="Entian K.-D."/>
            <person name="Rieger M."/>
            <person name="Schaefer M."/>
            <person name="Funk B."/>
            <person name="Mueller-Auer S."/>
            <person name="Silvey M."/>
            <person name="James R."/>
            <person name="Monfort A."/>
            <person name="Pons A."/>
            <person name="Puigdomenech P."/>
            <person name="Douka A."/>
            <person name="Voukelatou E."/>
            <person name="Milioni D."/>
            <person name="Hatzopoulos P."/>
            <person name="Piravandi E."/>
            <person name="Obermaier B."/>
            <person name="Hilbert H."/>
            <person name="Duesterhoeft A."/>
            <person name="Moores T."/>
            <person name="Jones J.D.G."/>
            <person name="Eneva T."/>
            <person name="Palme K."/>
            <person name="Benes V."/>
            <person name="Rechmann S."/>
            <person name="Ansorge W."/>
            <person name="Cooke R."/>
            <person name="Berger C."/>
            <person name="Delseny M."/>
            <person name="Voet M."/>
            <person name="Volckaert G."/>
            <person name="Mewes H.-W."/>
            <person name="Klosterman S."/>
            <person name="Schueller C."/>
            <person name="Chalwatzis N."/>
        </authorList>
    </citation>
    <scope>NUCLEOTIDE SEQUENCE [LARGE SCALE GENOMIC DNA]</scope>
    <source>
        <strain>cv. Columbia</strain>
    </source>
</reference>
<reference key="5">
    <citation type="journal article" date="1999" name="Nature">
        <title>Sequence and analysis of chromosome 4 of the plant Arabidopsis thaliana.</title>
        <authorList>
            <person name="Mayer K.F.X."/>
            <person name="Schueller C."/>
            <person name="Wambutt R."/>
            <person name="Murphy G."/>
            <person name="Volckaert G."/>
            <person name="Pohl T."/>
            <person name="Duesterhoeft A."/>
            <person name="Stiekema W."/>
            <person name="Entian K.-D."/>
            <person name="Terryn N."/>
            <person name="Harris B."/>
            <person name="Ansorge W."/>
            <person name="Brandt P."/>
            <person name="Grivell L.A."/>
            <person name="Rieger M."/>
            <person name="Weichselgartner M."/>
            <person name="de Simone V."/>
            <person name="Obermaier B."/>
            <person name="Mache R."/>
            <person name="Mueller M."/>
            <person name="Kreis M."/>
            <person name="Delseny M."/>
            <person name="Puigdomenech P."/>
            <person name="Watson M."/>
            <person name="Schmidtheini T."/>
            <person name="Reichert B."/>
            <person name="Portetelle D."/>
            <person name="Perez-Alonso M."/>
            <person name="Boutry M."/>
            <person name="Bancroft I."/>
            <person name="Vos P."/>
            <person name="Hoheisel J."/>
            <person name="Zimmermann W."/>
            <person name="Wedler H."/>
            <person name="Ridley P."/>
            <person name="Langham S.-A."/>
            <person name="McCullagh B."/>
            <person name="Bilham L."/>
            <person name="Robben J."/>
            <person name="van der Schueren J."/>
            <person name="Grymonprez B."/>
            <person name="Chuang Y.-J."/>
            <person name="Vandenbussche F."/>
            <person name="Braeken M."/>
            <person name="Weltjens I."/>
            <person name="Voet M."/>
            <person name="Bastiaens I."/>
            <person name="Aert R."/>
            <person name="Defoor E."/>
            <person name="Weitzenegger T."/>
            <person name="Bothe G."/>
            <person name="Ramsperger U."/>
            <person name="Hilbert H."/>
            <person name="Braun M."/>
            <person name="Holzer E."/>
            <person name="Brandt A."/>
            <person name="Peters S."/>
            <person name="van Staveren M."/>
            <person name="Dirkse W."/>
            <person name="Mooijman P."/>
            <person name="Klein Lankhorst R."/>
            <person name="Rose M."/>
            <person name="Hauf J."/>
            <person name="Koetter P."/>
            <person name="Berneiser S."/>
            <person name="Hempel S."/>
            <person name="Feldpausch M."/>
            <person name="Lamberth S."/>
            <person name="Van den Daele H."/>
            <person name="De Keyser A."/>
            <person name="Buysshaert C."/>
            <person name="Gielen J."/>
            <person name="Villarroel R."/>
            <person name="De Clercq R."/>
            <person name="van Montagu M."/>
            <person name="Rogers J."/>
            <person name="Cronin A."/>
            <person name="Quail M.A."/>
            <person name="Bray-Allen S."/>
            <person name="Clark L."/>
            <person name="Doggett J."/>
            <person name="Hall S."/>
            <person name="Kay M."/>
            <person name="Lennard N."/>
            <person name="McLay K."/>
            <person name="Mayes R."/>
            <person name="Pettett A."/>
            <person name="Rajandream M.A."/>
            <person name="Lyne M."/>
            <person name="Benes V."/>
            <person name="Rechmann S."/>
            <person name="Borkova D."/>
            <person name="Bloecker H."/>
            <person name="Scharfe M."/>
            <person name="Grimm M."/>
            <person name="Loehnert T.-H."/>
            <person name="Dose S."/>
            <person name="de Haan M."/>
            <person name="Maarse A.C."/>
            <person name="Schaefer M."/>
            <person name="Mueller-Auer S."/>
            <person name="Gabel C."/>
            <person name="Fuchs M."/>
            <person name="Fartmann B."/>
            <person name="Granderath K."/>
            <person name="Dauner D."/>
            <person name="Herzl A."/>
            <person name="Neumann S."/>
            <person name="Argiriou A."/>
            <person name="Vitale D."/>
            <person name="Liguori R."/>
            <person name="Piravandi E."/>
            <person name="Massenet O."/>
            <person name="Quigley F."/>
            <person name="Clabauld G."/>
            <person name="Muendlein A."/>
            <person name="Felber R."/>
            <person name="Schnabl S."/>
            <person name="Hiller R."/>
            <person name="Schmidt W."/>
            <person name="Lecharny A."/>
            <person name="Aubourg S."/>
            <person name="Chefdor F."/>
            <person name="Cooke R."/>
            <person name="Berger C."/>
            <person name="Monfort A."/>
            <person name="Casacuberta E."/>
            <person name="Gibbons T."/>
            <person name="Weber N."/>
            <person name="Vandenbol M."/>
            <person name="Bargues M."/>
            <person name="Terol J."/>
            <person name="Torres A."/>
            <person name="Perez-Perez A."/>
            <person name="Purnelle B."/>
            <person name="Bent E."/>
            <person name="Johnson S."/>
            <person name="Tacon D."/>
            <person name="Jesse T."/>
            <person name="Heijnen L."/>
            <person name="Schwarz S."/>
            <person name="Scholler P."/>
            <person name="Heber S."/>
            <person name="Francs P."/>
            <person name="Bielke C."/>
            <person name="Frishman D."/>
            <person name="Haase D."/>
            <person name="Lemcke K."/>
            <person name="Mewes H.-W."/>
            <person name="Stocker S."/>
            <person name="Zaccaria P."/>
            <person name="Bevan M."/>
            <person name="Wilson R.K."/>
            <person name="de la Bastide M."/>
            <person name="Habermann K."/>
            <person name="Parnell L."/>
            <person name="Dedhia N."/>
            <person name="Gnoj L."/>
            <person name="Schutz K."/>
            <person name="Huang E."/>
            <person name="Spiegel L."/>
            <person name="Sekhon M."/>
            <person name="Murray J."/>
            <person name="Sheet P."/>
            <person name="Cordes M."/>
            <person name="Abu-Threideh J."/>
            <person name="Stoneking T."/>
            <person name="Kalicki J."/>
            <person name="Graves T."/>
            <person name="Harmon G."/>
            <person name="Edwards J."/>
            <person name="Latreille P."/>
            <person name="Courtney L."/>
            <person name="Cloud J."/>
            <person name="Abbott A."/>
            <person name="Scott K."/>
            <person name="Johnson D."/>
            <person name="Minx P."/>
            <person name="Bentley D."/>
            <person name="Fulton B."/>
            <person name="Miller N."/>
            <person name="Greco T."/>
            <person name="Kemp K."/>
            <person name="Kramer J."/>
            <person name="Fulton L."/>
            <person name="Mardis E."/>
            <person name="Dante M."/>
            <person name="Pepin K."/>
            <person name="Hillier L.W."/>
            <person name="Nelson J."/>
            <person name="Spieth J."/>
            <person name="Ryan E."/>
            <person name="Andrews S."/>
            <person name="Geisel C."/>
            <person name="Layman D."/>
            <person name="Du H."/>
            <person name="Ali J."/>
            <person name="Berghoff A."/>
            <person name="Jones K."/>
            <person name="Drone K."/>
            <person name="Cotton M."/>
            <person name="Joshu C."/>
            <person name="Antonoiu B."/>
            <person name="Zidanic M."/>
            <person name="Strong C."/>
            <person name="Sun H."/>
            <person name="Lamar B."/>
            <person name="Yordan C."/>
            <person name="Ma P."/>
            <person name="Zhong J."/>
            <person name="Preston R."/>
            <person name="Vil D."/>
            <person name="Shekher M."/>
            <person name="Matero A."/>
            <person name="Shah R."/>
            <person name="Swaby I.K."/>
            <person name="O'Shaughnessy A."/>
            <person name="Rodriguez M."/>
            <person name="Hoffman J."/>
            <person name="Till S."/>
            <person name="Granat S."/>
            <person name="Shohdy N."/>
            <person name="Hasegawa A."/>
            <person name="Hameed A."/>
            <person name="Lodhi M."/>
            <person name="Johnson A."/>
            <person name="Chen E."/>
            <person name="Marra M.A."/>
            <person name="Martienssen R."/>
            <person name="McCombie W.R."/>
        </authorList>
    </citation>
    <scope>NUCLEOTIDE SEQUENCE [LARGE SCALE GENOMIC DNA]</scope>
    <source>
        <strain>cv. Columbia</strain>
    </source>
</reference>
<reference key="6">
    <citation type="journal article" date="2017" name="Plant J.">
        <title>Araport11: a complete reannotation of the Arabidopsis thaliana reference genome.</title>
        <authorList>
            <person name="Cheng C.Y."/>
            <person name="Krishnakumar V."/>
            <person name="Chan A.P."/>
            <person name="Thibaud-Nissen F."/>
            <person name="Schobel S."/>
            <person name="Town C.D."/>
        </authorList>
    </citation>
    <scope>GENOME REANNOTATION</scope>
    <source>
        <strain>cv. Columbia</strain>
    </source>
</reference>
<reference key="7">
    <citation type="journal article" date="2003" name="Science">
        <title>Empirical analysis of transcriptional activity in the Arabidopsis genome.</title>
        <authorList>
            <person name="Yamada K."/>
            <person name="Lim J."/>
            <person name="Dale J.M."/>
            <person name="Chen H."/>
            <person name="Shinn P."/>
            <person name="Palm C.J."/>
            <person name="Southwick A.M."/>
            <person name="Wu H.C."/>
            <person name="Kim C.J."/>
            <person name="Nguyen M."/>
            <person name="Pham P.K."/>
            <person name="Cheuk R.F."/>
            <person name="Karlin-Newmann G."/>
            <person name="Liu S.X."/>
            <person name="Lam B."/>
            <person name="Sakano H."/>
            <person name="Wu T."/>
            <person name="Yu G."/>
            <person name="Miranda M."/>
            <person name="Quach H.L."/>
            <person name="Tripp M."/>
            <person name="Chang C.H."/>
            <person name="Lee J.M."/>
            <person name="Toriumi M.J."/>
            <person name="Chan M.M."/>
            <person name="Tang C.C."/>
            <person name="Onodera C.S."/>
            <person name="Deng J.M."/>
            <person name="Akiyama K."/>
            <person name="Ansari Y."/>
            <person name="Arakawa T."/>
            <person name="Banh J."/>
            <person name="Banno F."/>
            <person name="Bowser L."/>
            <person name="Brooks S.Y."/>
            <person name="Carninci P."/>
            <person name="Chao Q."/>
            <person name="Choy N."/>
            <person name="Enju A."/>
            <person name="Goldsmith A.D."/>
            <person name="Gurjal M."/>
            <person name="Hansen N.F."/>
            <person name="Hayashizaki Y."/>
            <person name="Johnson-Hopson C."/>
            <person name="Hsuan V.W."/>
            <person name="Iida K."/>
            <person name="Karnes M."/>
            <person name="Khan S."/>
            <person name="Koesema E."/>
            <person name="Ishida J."/>
            <person name="Jiang P.X."/>
            <person name="Jones T."/>
            <person name="Kawai J."/>
            <person name="Kamiya A."/>
            <person name="Meyers C."/>
            <person name="Nakajima M."/>
            <person name="Narusaka M."/>
            <person name="Seki M."/>
            <person name="Sakurai T."/>
            <person name="Satou M."/>
            <person name="Tamse R."/>
            <person name="Vaysberg M."/>
            <person name="Wallender E.K."/>
            <person name="Wong C."/>
            <person name="Yamamura Y."/>
            <person name="Yuan S."/>
            <person name="Shinozaki K."/>
            <person name="Davis R.W."/>
            <person name="Theologis A."/>
            <person name="Ecker J.R."/>
        </authorList>
    </citation>
    <scope>NUCLEOTIDE SEQUENCE [LARGE SCALE MRNA]</scope>
    <source>
        <strain>cv. Columbia</strain>
    </source>
</reference>
<reference key="8">
    <citation type="journal article" date="2007" name="Mol. Ecol.">
        <title>Sequence diversity and haplotype associations with phenotypic responses to crowding: GIGANTEA affects fruit set in Arabidopsis thaliana.</title>
        <authorList>
            <person name="Brock M.T."/>
            <person name="Tiffin P."/>
            <person name="Weinig C."/>
        </authorList>
    </citation>
    <scope>NUCLEOTIDE SEQUENCE [GENOMIC DNA] OF 19-217</scope>
    <scope>VARIANTS PRO-35; ILE-79; VAL-88; TYR-123 AND LYS-162</scope>
    <source>
        <strain>cv. An-2</strain>
        <strain>cv. Bla-6</strain>
        <strain>cv. Br-0</strain>
        <strain>cv. Bu-2</strain>
        <strain>cv. Columbia</strain>
        <strain>cv. Di-1</strain>
        <strain>cv. Et-0</strain>
        <strain>cv. Kl-1</strain>
        <strain>cv. Li-5:3</strain>
        <strain>cv. Ma-2</strain>
        <strain>cv. Mt-0</strain>
        <strain>cv. Pa-2</strain>
        <strain>cv. Pi-0</strain>
        <strain>cv. Su-0</strain>
        <strain>cv. Tsu-1</strain>
    </source>
</reference>
<reference key="9">
    <citation type="journal article" date="2003" name="Mol. Ecol.">
        <title>Subdivision and haplotype structure in natural populations of Arabidopsis lyrata.</title>
        <authorList>
            <person name="Wright S.I."/>
            <person name="Lauga B."/>
            <person name="Charlesworth D."/>
        </authorList>
    </citation>
    <scope>NUCLEOTIDE SEQUENCE [GENOMIC DNA] OF 108-238</scope>
    <source>
        <strain>cv. CIBC-10</strain>
        <strain>cv. GB</strain>
        <strain>cv. KNO-1</strain>
        <strain>cv. NA-A</strain>
    </source>
</reference>
<reference key="10">
    <citation type="journal article" date="1993" name="EMBO J.">
        <title>The Athb-1 and -2 HD-Zip domains homodimerize forming complexes of different DNA binding specificities.</title>
        <authorList>
            <person name="Sessa G."/>
            <person name="Morelli G."/>
            <person name="Ruberti I."/>
        </authorList>
    </citation>
    <scope>DNA-BINDING</scope>
</reference>
<reference key="11">
    <citation type="journal article" date="1997" name="J. Mol. Biol.">
        <title>DNA-binding specificity of the homeodomain-leucine zipper domain.</title>
        <authorList>
            <person name="Sessa G."/>
            <person name="Morelli G."/>
            <person name="Ruberti I."/>
        </authorList>
    </citation>
    <scope>DNA-BINDING</scope>
    <scope>MUTAGENESIS OF VAL-172; ASN-176 AND ARG-180</scope>
</reference>
<reference key="12">
    <citation type="journal article" date="1999" name="Development">
        <title>Shade avoidance responses are mediated by the ATHB-2 HD-zip protein, a negative regulator of gene expression.</title>
        <authorList>
            <person name="Steindler C."/>
            <person name="Matteucci A."/>
            <person name="Sessa G."/>
            <person name="Weimar T."/>
            <person name="Ohgishi M."/>
            <person name="Aoyama T."/>
            <person name="Morelli G."/>
            <person name="Ruberti I."/>
        </authorList>
    </citation>
    <scope>FUNCTION</scope>
</reference>
<reference key="13">
    <citation type="journal article" date="2001" name="Plant J.">
        <title>Negative autoregulation of the Arabidopsis homeobox gene ATHB-2.</title>
        <authorList>
            <person name="Ohgishi M."/>
            <person name="Oka A."/>
            <person name="Morelli G."/>
            <person name="Ruberti I."/>
            <person name="Aoyama T."/>
        </authorList>
    </citation>
    <scope>FUNCTION</scope>
</reference>
<reference key="14">
    <citation type="journal article" date="2005" name="Plant Physiol.">
        <title>Homeodomain leucine zipper class I genes in Arabidopsis. Expression patterns and phylogenetic relationships.</title>
        <authorList>
            <person name="Henriksson E."/>
            <person name="Olsson A.S.B."/>
            <person name="Johannesson H."/>
            <person name="Johansson H."/>
            <person name="Hanson J."/>
            <person name="Engstroem P."/>
            <person name="Soederman E."/>
        </authorList>
    </citation>
    <scope>GENE FAMILY</scope>
</reference>
<feature type="chain" id="PRO_0000048901" description="Homeobox-leucine zipper protein HAT4">
    <location>
        <begin position="1"/>
        <end position="284"/>
    </location>
</feature>
<feature type="DNA-binding region" description="Homeobox" evidence="1">
    <location>
        <begin position="126"/>
        <end position="185"/>
    </location>
</feature>
<feature type="region of interest" description="Disordered" evidence="2">
    <location>
        <begin position="48"/>
        <end position="132"/>
    </location>
</feature>
<feature type="region of interest" description="Leucine-zipper">
    <location>
        <begin position="193"/>
        <end position="214"/>
    </location>
</feature>
<feature type="compositionally biased region" description="Polar residues" evidence="2">
    <location>
        <begin position="48"/>
        <end position="59"/>
    </location>
</feature>
<feature type="compositionally biased region" description="Low complexity" evidence="2">
    <location>
        <begin position="89"/>
        <end position="100"/>
    </location>
</feature>
<feature type="sequence variant" description="In strain: cv. Tsu-1." evidence="5">
    <original>S</original>
    <variation>P</variation>
    <location>
        <position position="35"/>
    </location>
</feature>
<feature type="sequence variant" description="In strain: cv. Kl-1." evidence="5">
    <original>T</original>
    <variation>I</variation>
    <location>
        <position position="79"/>
    </location>
</feature>
<feature type="sequence variant" description="In strain: cv. Bla-6, cv. Bu-2, cv. Di-1 and cv. Pi-0." evidence="5">
    <original>G</original>
    <variation>V</variation>
    <location>
        <position position="88"/>
    </location>
</feature>
<feature type="sequence variant" description="In strain: cv. Tsu-1." evidence="5">
    <original>D</original>
    <variation>Y</variation>
    <location>
        <position position="123"/>
    </location>
</feature>
<feature type="sequence variant" description="In strain: cv. Bla-6." evidence="5">
    <original>Q</original>
    <variation>K</variation>
    <location>
        <position position="162"/>
    </location>
</feature>
<feature type="mutagenesis site" description="Abolishes DNA-binding." evidence="8">
    <original>V</original>
    <variation>A</variation>
    <location>
        <position position="172"/>
    </location>
</feature>
<feature type="mutagenesis site" description="Abolishes DNA-binding." evidence="8">
    <original>N</original>
    <variation>A</variation>
    <location>
        <position position="176"/>
    </location>
</feature>
<feature type="mutagenesis site" description="Abolishes DNA-binding." evidence="8">
    <original>R</original>
    <variation>A</variation>
    <location>
        <position position="180"/>
    </location>
</feature>
<feature type="sequence conflict" description="In Ref. 1; AAA32815 and 2; CAA79670." evidence="9" ref="1 2">
    <original>A</original>
    <variation>V</variation>
    <location>
        <position position="216"/>
    </location>
</feature>
<comment type="function">
    <text evidence="3 4 7">Probable transcription factor involved in the negative regulation of cell elongation and specific cell proliferation processes such as lateral root formation and secondary growth of the vascular system. Acts as a mediator of the red/far-red light effects on leaf cell expansion in the shading response. Binds to the DNA sequence 5'-CAAT[GC]ATTG-3'. Negatively regulates its own expression.</text>
</comment>
<comment type="subunit">
    <text>Interacts with DNA as homodimer.</text>
</comment>
<comment type="interaction">
    <interactant intactId="EBI-4428728">
        <id>Q05466</id>
    </interactant>
    <interactant intactId="EBI-3133795">
        <id>Q8GXM7</id>
        <label>ATHB-X</label>
    </interactant>
    <organismsDiffer>false</organismsDiffer>
    <experiments>5</experiments>
</comment>
<comment type="interaction">
    <interactant intactId="EBI-4428728">
        <id>Q05466</id>
    </interactant>
    <interactant intactId="EBI-1390454">
        <id>Q9SU72</id>
        <label>EDS1</label>
    </interactant>
    <organismsDiffer>false</organismsDiffer>
    <experiments>3</experiments>
</comment>
<comment type="interaction">
    <interactant intactId="EBI-4428728">
        <id>Q05466</id>
    </interactant>
    <interactant intactId="EBI-15195911">
        <id>P46600</id>
        <label>HAT1</label>
    </interactant>
    <organismsDiffer>false</organismsDiffer>
    <experiments>3</experiments>
</comment>
<comment type="interaction">
    <interactant intactId="EBI-4428728">
        <id>Q05466</id>
    </interactant>
    <interactant intactId="EBI-4448195">
        <id>P46601</id>
        <label>HAT2</label>
    </interactant>
    <organismsDiffer>false</organismsDiffer>
    <experiments>4</experiments>
</comment>
<comment type="interaction">
    <interactant intactId="EBI-4428728">
        <id>Q05466</id>
    </interactant>
    <interactant intactId="EBI-4448318">
        <id>P46604</id>
        <label>HAT22</label>
    </interactant>
    <organismsDiffer>false</organismsDiffer>
    <experiments>3</experiments>
</comment>
<comment type="interaction">
    <interactant intactId="EBI-4428728">
        <id>Q05466</id>
    </interactant>
    <interactant intactId="EBI-4450405">
        <id>P46602</id>
        <label>HAT3</label>
    </interactant>
    <organismsDiffer>false</organismsDiffer>
    <experiments>3</experiments>
</comment>
<comment type="interaction">
    <interactant intactId="EBI-4428728">
        <id>Q05466</id>
    </interactant>
    <interactant intactId="EBI-4424877">
        <id>Q9S7W5</id>
        <label>TCP13</label>
    </interactant>
    <organismsDiffer>false</organismsDiffer>
    <experiments>3</experiments>
</comment>
<comment type="interaction">
    <interactant intactId="EBI-4428728">
        <id>Q05466</id>
    </interactant>
    <interactant intactId="EBI-15192325">
        <id>Q8LPR5</id>
        <label>TCP4</label>
    </interactant>
    <organismsDiffer>false</organismsDiffer>
    <experiments>3</experiments>
</comment>
<comment type="subcellular location">
    <subcellularLocation>
        <location>Nucleus</location>
    </subcellularLocation>
</comment>
<comment type="tissue specificity">
    <text evidence="6">Predominantly expressed in leaves and stems.</text>
</comment>
<comment type="induction">
    <text evidence="6">Rapidly and strongly induced by lowering the ratio of red to far-red light.</text>
</comment>
<comment type="similarity">
    <text evidence="9">Belongs to the HD-ZIP homeobox family. Class II subfamily.</text>
</comment>